<organism>
    <name type="scientific">Mus musculus</name>
    <name type="common">Mouse</name>
    <dbReference type="NCBI Taxonomy" id="10090"/>
    <lineage>
        <taxon>Eukaryota</taxon>
        <taxon>Metazoa</taxon>
        <taxon>Chordata</taxon>
        <taxon>Craniata</taxon>
        <taxon>Vertebrata</taxon>
        <taxon>Euteleostomi</taxon>
        <taxon>Mammalia</taxon>
        <taxon>Eutheria</taxon>
        <taxon>Euarchontoglires</taxon>
        <taxon>Glires</taxon>
        <taxon>Rodentia</taxon>
        <taxon>Myomorpha</taxon>
        <taxon>Muroidea</taxon>
        <taxon>Muridae</taxon>
        <taxon>Murinae</taxon>
        <taxon>Mus</taxon>
        <taxon>Mus</taxon>
    </lineage>
</organism>
<dbReference type="EMBL" id="AK011476">
    <property type="protein sequence ID" value="BAB27644.1"/>
    <property type="molecule type" value="mRNA"/>
</dbReference>
<dbReference type="EMBL" id="AK151642">
    <property type="protein sequence ID" value="BAE30572.1"/>
    <property type="molecule type" value="mRNA"/>
</dbReference>
<dbReference type="EMBL" id="CT030257">
    <property type="status" value="NOT_ANNOTATED_CDS"/>
    <property type="molecule type" value="Genomic_DNA"/>
</dbReference>
<dbReference type="EMBL" id="BC029784">
    <property type="protein sequence ID" value="AAH29784.1"/>
    <property type="molecule type" value="mRNA"/>
</dbReference>
<dbReference type="EMBL" id="AL355719">
    <property type="protein sequence ID" value="CAB90812.1"/>
    <property type="molecule type" value="mRNA"/>
</dbReference>
<dbReference type="CCDS" id="CCDS26794.1"/>
<dbReference type="RefSeq" id="NP_067531.1">
    <property type="nucleotide sequence ID" value="NM_021556.3"/>
</dbReference>
<dbReference type="SMR" id="Q9D0G0"/>
<dbReference type="BioGRID" id="208517">
    <property type="interactions" value="27"/>
</dbReference>
<dbReference type="ComplexPortal" id="CPX-5302">
    <property type="entry name" value="39S mitochondrial large ribosomal subunit"/>
</dbReference>
<dbReference type="FunCoup" id="Q9D0G0">
    <property type="interactions" value="1556"/>
</dbReference>
<dbReference type="STRING" id="10090.ENSMUSP00000022245"/>
<dbReference type="iPTMnet" id="Q9D0G0"/>
<dbReference type="PhosphoSitePlus" id="Q9D0G0"/>
<dbReference type="SwissPalm" id="Q9D0G0"/>
<dbReference type="jPOST" id="Q9D0G0"/>
<dbReference type="PaxDb" id="10090-ENSMUSP00000022245"/>
<dbReference type="PeptideAtlas" id="Q9D0G0"/>
<dbReference type="ProteomicsDB" id="257048"/>
<dbReference type="Pumba" id="Q9D0G0"/>
<dbReference type="Antibodypedia" id="10864">
    <property type="antibodies" value="134 antibodies from 22 providers"/>
</dbReference>
<dbReference type="Ensembl" id="ENSMUST00000022245.10">
    <property type="protein sequence ID" value="ENSMUSP00000022245.9"/>
    <property type="gene ID" value="ENSMUSG00000021731.11"/>
</dbReference>
<dbReference type="GeneID" id="59054"/>
<dbReference type="KEGG" id="mmu:59054"/>
<dbReference type="UCSC" id="uc007ryr.1">
    <property type="organism name" value="mouse"/>
</dbReference>
<dbReference type="AGR" id="MGI:1926237"/>
<dbReference type="CTD" id="10884"/>
<dbReference type="MGI" id="MGI:1926237">
    <property type="gene designation" value="Mrps30"/>
</dbReference>
<dbReference type="VEuPathDB" id="HostDB:ENSMUSG00000021731"/>
<dbReference type="eggNOG" id="KOG4461">
    <property type="taxonomic scope" value="Eukaryota"/>
</dbReference>
<dbReference type="GeneTree" id="ENSGT00390000001442"/>
<dbReference type="HOGENOM" id="CLU_049608_0_0_1"/>
<dbReference type="InParanoid" id="Q9D0G0"/>
<dbReference type="OMA" id="VNMPRYY"/>
<dbReference type="OrthoDB" id="6041973at2759"/>
<dbReference type="PhylomeDB" id="Q9D0G0"/>
<dbReference type="TreeFam" id="TF320686"/>
<dbReference type="Reactome" id="R-MMU-5389840">
    <property type="pathway name" value="Mitochondrial translation elongation"/>
</dbReference>
<dbReference type="Reactome" id="R-MMU-5419276">
    <property type="pathway name" value="Mitochondrial translation termination"/>
</dbReference>
<dbReference type="BioGRID-ORCS" id="59054">
    <property type="hits" value="25 hits in 80 CRISPR screens"/>
</dbReference>
<dbReference type="ChiTaRS" id="Mrps30">
    <property type="organism name" value="mouse"/>
</dbReference>
<dbReference type="PRO" id="PR:Q9D0G0"/>
<dbReference type="Proteomes" id="UP000000589">
    <property type="component" value="Chromosome 13"/>
</dbReference>
<dbReference type="RNAct" id="Q9D0G0">
    <property type="molecule type" value="protein"/>
</dbReference>
<dbReference type="Bgee" id="ENSMUSG00000021731">
    <property type="expression patterns" value="Expressed in interventricular septum and 263 other cell types or tissues"/>
</dbReference>
<dbReference type="GO" id="GO:0005743">
    <property type="term" value="C:mitochondrial inner membrane"/>
    <property type="evidence" value="ECO:0000303"/>
    <property type="project" value="ComplexPortal"/>
</dbReference>
<dbReference type="GO" id="GO:0005762">
    <property type="term" value="C:mitochondrial large ribosomal subunit"/>
    <property type="evidence" value="ECO:0000303"/>
    <property type="project" value="ComplexPortal"/>
</dbReference>
<dbReference type="GO" id="GO:0005739">
    <property type="term" value="C:mitochondrion"/>
    <property type="evidence" value="ECO:0007005"/>
    <property type="project" value="MGI"/>
</dbReference>
<dbReference type="GO" id="GO:0003735">
    <property type="term" value="F:structural constituent of ribosome"/>
    <property type="evidence" value="ECO:0007669"/>
    <property type="project" value="InterPro"/>
</dbReference>
<dbReference type="GO" id="GO:0032543">
    <property type="term" value="P:mitochondrial translation"/>
    <property type="evidence" value="ECO:0000303"/>
    <property type="project" value="ComplexPortal"/>
</dbReference>
<dbReference type="InterPro" id="IPR010793">
    <property type="entry name" value="Ribosomal_mL37/mL65"/>
</dbReference>
<dbReference type="InterPro" id="IPR039982">
    <property type="entry name" value="Ribosomal_mL65"/>
</dbReference>
<dbReference type="PANTHER" id="PTHR13014:SF3">
    <property type="entry name" value="LARGE RIBOSOMAL SUBUNIT PROTEIN ML65"/>
    <property type="match status" value="1"/>
</dbReference>
<dbReference type="PANTHER" id="PTHR13014">
    <property type="entry name" value="MITOCHONDRIAL 28S RIBOSOMAL PROTEIN S30/P52 PRO-APOTOTIC PROTEIN"/>
    <property type="match status" value="1"/>
</dbReference>
<dbReference type="Pfam" id="PF07147">
    <property type="entry name" value="PDCD9"/>
    <property type="match status" value="1"/>
</dbReference>
<keyword id="KW-0496">Mitochondrion</keyword>
<keyword id="KW-1185">Reference proteome</keyword>
<keyword id="KW-0687">Ribonucleoprotein</keyword>
<keyword id="KW-0689">Ribosomal protein</keyword>
<name>RT30_MOUSE</name>
<sequence>MAAARYWKLVPRGRGLSQNAAAKASATAPEVRDLEVVATPVARYPPIVASMTADSKAARQRRVQRWQATVHAAPSVDEKIRILTKMQFKKYVVHPQISALNADRWYQSFTKTVFVSGLPPAPALSPPPPSLDLAALRAAVCDCILQEQVYVRRRRPRSLFDRRQALASSILDQVVRTLVNLLAPLNPVLSTAALDCKRSVDFYWLRGEERIPAGHRKGHIDALRYQINDKPHNQIRISKQLPEFVPLDYSIPTEIPVMKCKPDKLPLFRRQYENSIFTGSKTADPCCYGHTQFHLIPDRLKRERLIRQNQAEQVEAVFRANAIASLFAWTGAQAMYQGFWSEADVTRPFVSQAVITDGKYFSFFCYQLNTLALTVQADQNNPRKNLCWGSQSQPLYETVEDNDVKGFDDGTLLQIVHFLLNKPREDGAQLLASQEKELDLGP</sequence>
<proteinExistence type="evidence at protein level"/>
<protein>
    <recommendedName>
        <fullName evidence="2">Large ribosomal subunit protein mL65</fullName>
    </recommendedName>
    <alternativeName>
        <fullName>28S ribosomal protein S30, mitochondrial</fullName>
        <shortName>MRP-S30</shortName>
        <shortName>S30mt</shortName>
    </alternativeName>
</protein>
<comment type="subunit">
    <text>Component of the mitochondrial ribosome small subunit (28S) which comprises a 12S rRNA and about 30 distinct proteins.</text>
</comment>
<comment type="subcellular location">
    <subcellularLocation>
        <location evidence="1">Mitochondrion</location>
    </subcellularLocation>
</comment>
<comment type="similarity">
    <text evidence="2">Belongs to the mitochondrion-specific ribosomal protein mL65 family.</text>
</comment>
<evidence type="ECO:0000250" key="1"/>
<evidence type="ECO:0000305" key="2"/>
<feature type="chain" id="PRO_0000087721" description="Large ribosomal subunit protein mL65">
    <location>
        <begin position="1"/>
        <end position="442"/>
    </location>
</feature>
<feature type="sequence conflict" description="In Ref. 3; AAH29784." evidence="2" ref="3">
    <original>A</original>
    <variation>T</variation>
    <location>
        <position position="121"/>
    </location>
</feature>
<feature type="sequence conflict" description="In Ref. 3; AAH29784." evidence="2" ref="3">
    <original>P</original>
    <variation>SPS</variation>
    <location>
        <position position="127"/>
    </location>
</feature>
<feature type="sequence conflict" description="In Ref. 3; AAH29784." evidence="2" ref="3">
    <original>RPR</original>
    <variation>QPG</variation>
    <location>
        <begin position="155"/>
        <end position="157"/>
    </location>
</feature>
<accession>Q9D0G0</accession>
<accession>B2KF79</accession>
<accession>Q3U9U4</accession>
<accession>Q9CYS8</accession>
<accession>Q9JJQ2</accession>
<gene>
    <name type="primary">Mrps30</name>
</gene>
<reference key="1">
    <citation type="journal article" date="2005" name="Science">
        <title>The transcriptional landscape of the mammalian genome.</title>
        <authorList>
            <person name="Carninci P."/>
            <person name="Kasukawa T."/>
            <person name="Katayama S."/>
            <person name="Gough J."/>
            <person name="Frith M.C."/>
            <person name="Maeda N."/>
            <person name="Oyama R."/>
            <person name="Ravasi T."/>
            <person name="Lenhard B."/>
            <person name="Wells C."/>
            <person name="Kodzius R."/>
            <person name="Shimokawa K."/>
            <person name="Bajic V.B."/>
            <person name="Brenner S.E."/>
            <person name="Batalov S."/>
            <person name="Forrest A.R."/>
            <person name="Zavolan M."/>
            <person name="Davis M.J."/>
            <person name="Wilming L.G."/>
            <person name="Aidinis V."/>
            <person name="Allen J.E."/>
            <person name="Ambesi-Impiombato A."/>
            <person name="Apweiler R."/>
            <person name="Aturaliya R.N."/>
            <person name="Bailey T.L."/>
            <person name="Bansal M."/>
            <person name="Baxter L."/>
            <person name="Beisel K.W."/>
            <person name="Bersano T."/>
            <person name="Bono H."/>
            <person name="Chalk A.M."/>
            <person name="Chiu K.P."/>
            <person name="Choudhary V."/>
            <person name="Christoffels A."/>
            <person name="Clutterbuck D.R."/>
            <person name="Crowe M.L."/>
            <person name="Dalla E."/>
            <person name="Dalrymple B.P."/>
            <person name="de Bono B."/>
            <person name="Della Gatta G."/>
            <person name="di Bernardo D."/>
            <person name="Down T."/>
            <person name="Engstrom P."/>
            <person name="Fagiolini M."/>
            <person name="Faulkner G."/>
            <person name="Fletcher C.F."/>
            <person name="Fukushima T."/>
            <person name="Furuno M."/>
            <person name="Futaki S."/>
            <person name="Gariboldi M."/>
            <person name="Georgii-Hemming P."/>
            <person name="Gingeras T.R."/>
            <person name="Gojobori T."/>
            <person name="Green R.E."/>
            <person name="Gustincich S."/>
            <person name="Harbers M."/>
            <person name="Hayashi Y."/>
            <person name="Hensch T.K."/>
            <person name="Hirokawa N."/>
            <person name="Hill D."/>
            <person name="Huminiecki L."/>
            <person name="Iacono M."/>
            <person name="Ikeo K."/>
            <person name="Iwama A."/>
            <person name="Ishikawa T."/>
            <person name="Jakt M."/>
            <person name="Kanapin A."/>
            <person name="Katoh M."/>
            <person name="Kawasawa Y."/>
            <person name="Kelso J."/>
            <person name="Kitamura H."/>
            <person name="Kitano H."/>
            <person name="Kollias G."/>
            <person name="Krishnan S.P."/>
            <person name="Kruger A."/>
            <person name="Kummerfeld S.K."/>
            <person name="Kurochkin I.V."/>
            <person name="Lareau L.F."/>
            <person name="Lazarevic D."/>
            <person name="Lipovich L."/>
            <person name="Liu J."/>
            <person name="Liuni S."/>
            <person name="McWilliam S."/>
            <person name="Madan Babu M."/>
            <person name="Madera M."/>
            <person name="Marchionni L."/>
            <person name="Matsuda H."/>
            <person name="Matsuzawa S."/>
            <person name="Miki H."/>
            <person name="Mignone F."/>
            <person name="Miyake S."/>
            <person name="Morris K."/>
            <person name="Mottagui-Tabar S."/>
            <person name="Mulder N."/>
            <person name="Nakano N."/>
            <person name="Nakauchi H."/>
            <person name="Ng P."/>
            <person name="Nilsson R."/>
            <person name="Nishiguchi S."/>
            <person name="Nishikawa S."/>
            <person name="Nori F."/>
            <person name="Ohara O."/>
            <person name="Okazaki Y."/>
            <person name="Orlando V."/>
            <person name="Pang K.C."/>
            <person name="Pavan W.J."/>
            <person name="Pavesi G."/>
            <person name="Pesole G."/>
            <person name="Petrovsky N."/>
            <person name="Piazza S."/>
            <person name="Reed J."/>
            <person name="Reid J.F."/>
            <person name="Ring B.Z."/>
            <person name="Ringwald M."/>
            <person name="Rost B."/>
            <person name="Ruan Y."/>
            <person name="Salzberg S.L."/>
            <person name="Sandelin A."/>
            <person name="Schneider C."/>
            <person name="Schoenbach C."/>
            <person name="Sekiguchi K."/>
            <person name="Semple C.A."/>
            <person name="Seno S."/>
            <person name="Sessa L."/>
            <person name="Sheng Y."/>
            <person name="Shibata Y."/>
            <person name="Shimada H."/>
            <person name="Shimada K."/>
            <person name="Silva D."/>
            <person name="Sinclair B."/>
            <person name="Sperling S."/>
            <person name="Stupka E."/>
            <person name="Sugiura K."/>
            <person name="Sultana R."/>
            <person name="Takenaka Y."/>
            <person name="Taki K."/>
            <person name="Tammoja K."/>
            <person name="Tan S.L."/>
            <person name="Tang S."/>
            <person name="Taylor M.S."/>
            <person name="Tegner J."/>
            <person name="Teichmann S.A."/>
            <person name="Ueda H.R."/>
            <person name="van Nimwegen E."/>
            <person name="Verardo R."/>
            <person name="Wei C.L."/>
            <person name="Yagi K."/>
            <person name="Yamanishi H."/>
            <person name="Zabarovsky E."/>
            <person name="Zhu S."/>
            <person name="Zimmer A."/>
            <person name="Hide W."/>
            <person name="Bult C."/>
            <person name="Grimmond S.M."/>
            <person name="Teasdale R.D."/>
            <person name="Liu E.T."/>
            <person name="Brusic V."/>
            <person name="Quackenbush J."/>
            <person name="Wahlestedt C."/>
            <person name="Mattick J.S."/>
            <person name="Hume D.A."/>
            <person name="Kai C."/>
            <person name="Sasaki D."/>
            <person name="Tomaru Y."/>
            <person name="Fukuda S."/>
            <person name="Kanamori-Katayama M."/>
            <person name="Suzuki M."/>
            <person name="Aoki J."/>
            <person name="Arakawa T."/>
            <person name="Iida J."/>
            <person name="Imamura K."/>
            <person name="Itoh M."/>
            <person name="Kato T."/>
            <person name="Kawaji H."/>
            <person name="Kawagashira N."/>
            <person name="Kawashima T."/>
            <person name="Kojima M."/>
            <person name="Kondo S."/>
            <person name="Konno H."/>
            <person name="Nakano K."/>
            <person name="Ninomiya N."/>
            <person name="Nishio T."/>
            <person name="Okada M."/>
            <person name="Plessy C."/>
            <person name="Shibata K."/>
            <person name="Shiraki T."/>
            <person name="Suzuki S."/>
            <person name="Tagami M."/>
            <person name="Waki K."/>
            <person name="Watahiki A."/>
            <person name="Okamura-Oho Y."/>
            <person name="Suzuki H."/>
            <person name="Kawai J."/>
            <person name="Hayashizaki Y."/>
        </authorList>
    </citation>
    <scope>NUCLEOTIDE SEQUENCE [LARGE SCALE MRNA]</scope>
    <source>
        <strain>C57BL/6J</strain>
        <tissue>Bone marrow</tissue>
        <tissue>Embryo</tissue>
    </source>
</reference>
<reference key="2">
    <citation type="journal article" date="2009" name="PLoS Biol.">
        <title>Lineage-specific biology revealed by a finished genome assembly of the mouse.</title>
        <authorList>
            <person name="Church D.M."/>
            <person name="Goodstadt L."/>
            <person name="Hillier L.W."/>
            <person name="Zody M.C."/>
            <person name="Goldstein S."/>
            <person name="She X."/>
            <person name="Bult C.J."/>
            <person name="Agarwala R."/>
            <person name="Cherry J.L."/>
            <person name="DiCuccio M."/>
            <person name="Hlavina W."/>
            <person name="Kapustin Y."/>
            <person name="Meric P."/>
            <person name="Maglott D."/>
            <person name="Birtle Z."/>
            <person name="Marques A.C."/>
            <person name="Graves T."/>
            <person name="Zhou S."/>
            <person name="Teague B."/>
            <person name="Potamousis K."/>
            <person name="Churas C."/>
            <person name="Place M."/>
            <person name="Herschleb J."/>
            <person name="Runnheim R."/>
            <person name="Forrest D."/>
            <person name="Amos-Landgraf J."/>
            <person name="Schwartz D.C."/>
            <person name="Cheng Z."/>
            <person name="Lindblad-Toh K."/>
            <person name="Eichler E.E."/>
            <person name="Ponting C.P."/>
        </authorList>
    </citation>
    <scope>NUCLEOTIDE SEQUENCE [LARGE SCALE GENOMIC DNA]</scope>
    <source>
        <strain>C57BL/6J</strain>
    </source>
</reference>
<reference key="3">
    <citation type="journal article" date="2004" name="Genome Res.">
        <title>The status, quality, and expansion of the NIH full-length cDNA project: the Mammalian Gene Collection (MGC).</title>
        <authorList>
            <consortium name="The MGC Project Team"/>
        </authorList>
    </citation>
    <scope>NUCLEOTIDE SEQUENCE [LARGE SCALE MRNA]</scope>
    <source>
        <strain>FVB/N</strain>
        <tissue>Mammary gland</tissue>
    </source>
</reference>
<reference key="4">
    <citation type="submission" date="2000-05" db="EMBL/GenBank/DDBJ databases">
        <authorList>
            <consortium name="The European IMAGE consortium"/>
        </authorList>
    </citation>
    <scope>NUCLEOTIDE SEQUENCE [LARGE SCALE MRNA] OF 283-442</scope>
</reference>
<reference key="5">
    <citation type="journal article" date="2010" name="Cell">
        <title>A tissue-specific atlas of mouse protein phosphorylation and expression.</title>
        <authorList>
            <person name="Huttlin E.L."/>
            <person name="Jedrychowski M.P."/>
            <person name="Elias J.E."/>
            <person name="Goswami T."/>
            <person name="Rad R."/>
            <person name="Beausoleil S.A."/>
            <person name="Villen J."/>
            <person name="Haas W."/>
            <person name="Sowa M.E."/>
            <person name="Gygi S.P."/>
        </authorList>
    </citation>
    <scope>IDENTIFICATION BY MASS SPECTROMETRY [LARGE SCALE ANALYSIS]</scope>
    <source>
        <tissue>Brain</tissue>
        <tissue>Brown adipose tissue</tissue>
        <tissue>Heart</tissue>
        <tissue>Kidney</tissue>
        <tissue>Liver</tissue>
        <tissue>Spleen</tissue>
        <tissue>Testis</tissue>
    </source>
</reference>